<sequence>MSVTTTETTGTAPALPRKTLGLAMIGLAVMMTLLHYAGLLPAWLHRLPEAIIPPFATWLDAIFNFVKDDLGLLALTRLLTDGLEVVLDATANLLFGKRRWPNIGPIPWSAIAAMTAVVGYYLGGWRMALLAGGTFVWTAMIGQWDIAMQTMSVLVVAAPLAFAIGLVLGISAWKSPSFDAVLRPVLAVLQTLPFFTYLLPAVIFFKVGPTAGAVATTVYAIPPMILMTTLGLQKVSPEVVEAGKMSGCTRWQMLRHVYIPAARTEILVGVNQVIMLCLAMVVLTAFIGMPGLGAKLLAMMGSFKIGRSFEIGVTIVLLAVTLDRMSKAWVVKLPEHFERGTPFWIRHKFLLMAIGAFVGFTLIAQVVPILSEVGRKQSWSQGKEIDTLIKGFLAIDAVQAITNSIRYVLNIWVLNPLRDFMLSIPTVAFVLFISAAALLVAGRREAVLAAAFFGLVALTGWWDRSVITLYSVLAAVSIALLLGVPIGVVAARKEKTANAVLLACDTAQTFPSFIYLIPAIMLFGITATSVVMSILIFSMVPLVRYTIEGLRNVPDEMTEAADMAGATRMQKLWNVQLPLALPTMAVGFNQAIMFAFFMVIIAAFIGTQDLGQELQRTLAGTDLGKNFVLGICVTLMALTFDMVIMKWADDKKARLGLN</sequence>
<gene>
    <name evidence="4" type="primary">tmoV</name>
    <name evidence="7" type="ordered locus">SPO1550</name>
</gene>
<protein>
    <recommendedName>
        <fullName evidence="5">Trimethylamine N-oxide transport system permease protein TmoV</fullName>
        <shortName evidence="5">TMAO transport system permease protein TmoV</shortName>
    </recommendedName>
</protein>
<name>TMOV_RUEPO</name>
<keyword id="KW-0997">Cell inner membrane</keyword>
<keyword id="KW-1003">Cell membrane</keyword>
<keyword id="KW-0472">Membrane</keyword>
<keyword id="KW-1185">Reference proteome</keyword>
<keyword id="KW-0677">Repeat</keyword>
<keyword id="KW-0812">Transmembrane</keyword>
<keyword id="KW-1133">Transmembrane helix</keyword>
<keyword id="KW-0813">Transport</keyword>
<comment type="function">
    <text evidence="3 5">Part of the ABC transporter complex TmoXWV involved in trimethylamine N-oxide (TMAO) import (PubMed:24550299). Responsible for the translocation of the substrate across the membrane (Probable). Is specific for TMAO and essential for TMAO metabolism (PubMed:24550299).</text>
</comment>
<comment type="subunit">
    <text evidence="6">The complex is probably composed of two ATP-binding proteins (TmoW), two transmembrane proteins (TmoV) and a solute-binding protein (TmoX).</text>
</comment>
<comment type="subcellular location">
    <subcellularLocation>
        <location evidence="5">Cell inner membrane</location>
        <topology evidence="1">Multi-pass membrane protein</topology>
    </subcellularLocation>
</comment>
<comment type="induction">
    <text evidence="3">Expression is induced by TMAO.</text>
</comment>
<comment type="similarity">
    <text evidence="5">Belongs to the binding-protein-dependent transport system permease family.</text>
</comment>
<organism>
    <name type="scientific">Ruegeria pomeroyi (strain ATCC 700808 / DSM 15171 / DSS-3)</name>
    <name type="common">Silicibacter pomeroyi</name>
    <dbReference type="NCBI Taxonomy" id="246200"/>
    <lineage>
        <taxon>Bacteria</taxon>
        <taxon>Pseudomonadati</taxon>
        <taxon>Pseudomonadota</taxon>
        <taxon>Alphaproteobacteria</taxon>
        <taxon>Rhodobacterales</taxon>
        <taxon>Roseobacteraceae</taxon>
        <taxon>Ruegeria</taxon>
    </lineage>
</organism>
<feature type="chain" id="PRO_0000458085" description="Trimethylamine N-oxide transport system permease protein TmoV">
    <location>
        <begin position="1"/>
        <end position="658"/>
    </location>
</feature>
<feature type="transmembrane region" description="Helical" evidence="1">
    <location>
        <begin position="20"/>
        <end position="40"/>
    </location>
</feature>
<feature type="transmembrane region" description="Helical" evidence="1">
    <location>
        <begin position="103"/>
        <end position="123"/>
    </location>
</feature>
<feature type="transmembrane region" description="Helical" evidence="1">
    <location>
        <begin position="127"/>
        <end position="147"/>
    </location>
</feature>
<feature type="transmembrane region" description="Helical" evidence="1">
    <location>
        <begin position="153"/>
        <end position="173"/>
    </location>
</feature>
<feature type="transmembrane region" description="Helical" evidence="1">
    <location>
        <begin position="185"/>
        <end position="205"/>
    </location>
</feature>
<feature type="transmembrane region" description="Helical" evidence="1">
    <location>
        <begin position="212"/>
        <end position="232"/>
    </location>
</feature>
<feature type="transmembrane region" description="Helical" evidence="1">
    <location>
        <begin position="273"/>
        <end position="293"/>
    </location>
</feature>
<feature type="transmembrane region" description="Helical" evidence="1">
    <location>
        <begin position="300"/>
        <end position="320"/>
    </location>
</feature>
<feature type="transmembrane region" description="Helical" evidence="1">
    <location>
        <begin position="349"/>
        <end position="369"/>
    </location>
</feature>
<feature type="transmembrane region" description="Helical" evidence="1">
    <location>
        <begin position="420"/>
        <end position="440"/>
    </location>
</feature>
<feature type="transmembrane region" description="Helical" evidence="1">
    <location>
        <begin position="447"/>
        <end position="467"/>
    </location>
</feature>
<feature type="transmembrane region" description="Helical" evidence="1">
    <location>
        <begin position="469"/>
        <end position="489"/>
    </location>
</feature>
<feature type="transmembrane region" description="Helical" evidence="1">
    <location>
        <begin position="517"/>
        <end position="537"/>
    </location>
</feature>
<feature type="transmembrane region" description="Helical" evidence="1">
    <location>
        <begin position="585"/>
        <end position="605"/>
    </location>
</feature>
<feature type="transmembrane region" description="Helical" evidence="1">
    <location>
        <begin position="627"/>
        <end position="647"/>
    </location>
</feature>
<feature type="domain" description="ABC transmembrane type-1 1" evidence="2">
    <location>
        <begin position="147"/>
        <end position="326"/>
    </location>
</feature>
<feature type="domain" description="ABC transmembrane type-1 2" evidence="2">
    <location>
        <begin position="465"/>
        <end position="644"/>
    </location>
</feature>
<reference key="1">
    <citation type="journal article" date="2004" name="Nature">
        <title>Genome sequence of Silicibacter pomeroyi reveals adaptations to the marine environment.</title>
        <authorList>
            <person name="Moran M.A."/>
            <person name="Buchan A."/>
            <person name="Gonzalez J.M."/>
            <person name="Heidelberg J.F."/>
            <person name="Whitman W.B."/>
            <person name="Kiene R.P."/>
            <person name="Henriksen J.R."/>
            <person name="King G.M."/>
            <person name="Belas R."/>
            <person name="Fuqua C."/>
            <person name="Brinkac L.M."/>
            <person name="Lewis M."/>
            <person name="Johri S."/>
            <person name="Weaver B."/>
            <person name="Pai G."/>
            <person name="Eisen J.A."/>
            <person name="Rahe E."/>
            <person name="Sheldon W.M."/>
            <person name="Ye W."/>
            <person name="Miller T.R."/>
            <person name="Carlton J."/>
            <person name="Rasko D.A."/>
            <person name="Paulsen I.T."/>
            <person name="Ren Q."/>
            <person name="Daugherty S.C."/>
            <person name="DeBoy R.T."/>
            <person name="Dodson R.J."/>
            <person name="Durkin A.S."/>
            <person name="Madupu R."/>
            <person name="Nelson W.C."/>
            <person name="Sullivan S.A."/>
            <person name="Rosovitz M.J."/>
            <person name="Haft D.H."/>
            <person name="Selengut J."/>
            <person name="Ward N."/>
        </authorList>
    </citation>
    <scope>NUCLEOTIDE SEQUENCE [LARGE SCALE GENOMIC DNA]</scope>
    <source>
        <strain>ATCC 700808 / DSM 15171 / DSS-3</strain>
    </source>
</reference>
<reference key="2">
    <citation type="journal article" date="2014" name="Stand. Genomic Sci.">
        <title>An updated genome annotation for the model marine bacterium Ruegeria pomeroyi DSS-3.</title>
        <authorList>
            <person name="Rivers A.R."/>
            <person name="Smith C.B."/>
            <person name="Moran M.A."/>
        </authorList>
    </citation>
    <scope>GENOME REANNOTATION</scope>
    <source>
        <strain>ATCC 700808 / DSM 15171 / DSS-3</strain>
    </source>
</reference>
<reference key="3">
    <citation type="journal article" date="2014" name="Proc. Natl. Acad. Sci. U.S.A.">
        <title>Trimethylamine N-oxide metabolism by abundant marine heterotrophic bacteria.</title>
        <authorList>
            <person name="Lidbury I."/>
            <person name="Murrell J.C."/>
            <person name="Chen Y."/>
        </authorList>
    </citation>
    <scope>FUNCTION IN TMAO TRANSPORT</scope>
    <scope>INDUCTION</scope>
    <source>
        <strain>ATCC 700808 / DSM 15171 / DSS-3</strain>
    </source>
</reference>
<dbReference type="EMBL" id="CP000031">
    <property type="protein sequence ID" value="AAV94837.1"/>
    <property type="molecule type" value="Genomic_DNA"/>
</dbReference>
<dbReference type="RefSeq" id="WP_011047287.1">
    <property type="nucleotide sequence ID" value="NC_003911.12"/>
</dbReference>
<dbReference type="SMR" id="Q5LT64"/>
<dbReference type="STRING" id="246200.SPO1550"/>
<dbReference type="PaxDb" id="246200-SPO1550"/>
<dbReference type="KEGG" id="sil:SPO1550"/>
<dbReference type="eggNOG" id="COG4176">
    <property type="taxonomic scope" value="Bacteria"/>
</dbReference>
<dbReference type="HOGENOM" id="CLU_023562_0_2_5"/>
<dbReference type="OrthoDB" id="9815258at2"/>
<dbReference type="Proteomes" id="UP000001023">
    <property type="component" value="Chromosome"/>
</dbReference>
<dbReference type="GO" id="GO:0043190">
    <property type="term" value="C:ATP-binding cassette (ABC) transporter complex"/>
    <property type="evidence" value="ECO:0007669"/>
    <property type="project" value="TreeGrafter"/>
</dbReference>
<dbReference type="GO" id="GO:0005275">
    <property type="term" value="F:amine transmembrane transporter activity"/>
    <property type="evidence" value="ECO:0007669"/>
    <property type="project" value="TreeGrafter"/>
</dbReference>
<dbReference type="GO" id="GO:0015226">
    <property type="term" value="F:carnitine transmembrane transporter activity"/>
    <property type="evidence" value="ECO:0007669"/>
    <property type="project" value="TreeGrafter"/>
</dbReference>
<dbReference type="GO" id="GO:0015871">
    <property type="term" value="P:choline transport"/>
    <property type="evidence" value="ECO:0007669"/>
    <property type="project" value="TreeGrafter"/>
</dbReference>
<dbReference type="GO" id="GO:0031460">
    <property type="term" value="P:glycine betaine transport"/>
    <property type="evidence" value="ECO:0007669"/>
    <property type="project" value="TreeGrafter"/>
</dbReference>
<dbReference type="CDD" id="cd06261">
    <property type="entry name" value="TM_PBP2"/>
    <property type="match status" value="2"/>
</dbReference>
<dbReference type="Gene3D" id="1.10.3720.10">
    <property type="entry name" value="MetI-like"/>
    <property type="match status" value="2"/>
</dbReference>
<dbReference type="InterPro" id="IPR000515">
    <property type="entry name" value="MetI-like"/>
</dbReference>
<dbReference type="InterPro" id="IPR035906">
    <property type="entry name" value="MetI-like_sf"/>
</dbReference>
<dbReference type="PANTHER" id="PTHR47737">
    <property type="entry name" value="GLYCINE BETAINE/PROLINE BETAINE TRANSPORT SYSTEM PERMEASE PROTEIN PROW"/>
    <property type="match status" value="1"/>
</dbReference>
<dbReference type="PANTHER" id="PTHR47737:SF1">
    <property type="entry name" value="GLYCINE BETAINE_PROLINE BETAINE TRANSPORT SYSTEM PERMEASE PROTEIN PROW"/>
    <property type="match status" value="1"/>
</dbReference>
<dbReference type="Pfam" id="PF00528">
    <property type="entry name" value="BPD_transp_1"/>
    <property type="match status" value="2"/>
</dbReference>
<dbReference type="SUPFAM" id="SSF161098">
    <property type="entry name" value="MetI-like"/>
    <property type="match status" value="2"/>
</dbReference>
<dbReference type="PROSITE" id="PS50928">
    <property type="entry name" value="ABC_TM1"/>
    <property type="match status" value="2"/>
</dbReference>
<proteinExistence type="evidence at protein level"/>
<accession>Q5LT64</accession>
<evidence type="ECO:0000255" key="1"/>
<evidence type="ECO:0000255" key="2">
    <source>
        <dbReference type="PROSITE-ProRule" id="PRU00441"/>
    </source>
</evidence>
<evidence type="ECO:0000269" key="3">
    <source>
    </source>
</evidence>
<evidence type="ECO:0000303" key="4">
    <source>
    </source>
</evidence>
<evidence type="ECO:0000305" key="5"/>
<evidence type="ECO:0000305" key="6">
    <source>
    </source>
</evidence>
<evidence type="ECO:0000312" key="7">
    <source>
        <dbReference type="EMBL" id="AAV94837.1"/>
    </source>
</evidence>